<organismHost>
    <name type="scientific">Vertebrata</name>
    <dbReference type="NCBI Taxonomy" id="7742"/>
</organismHost>
<feature type="chain" id="PRO_0000448407" description="Poly(A) polymerase catalytic subunit">
    <location>
        <begin position="1"/>
        <end position="472"/>
    </location>
</feature>
<feature type="active site" evidence="1">
    <location>
        <position position="194"/>
    </location>
</feature>
<feature type="active site" evidence="1">
    <location>
        <position position="196"/>
    </location>
</feature>
<comment type="function">
    <text>Polymerase that creates the 3'-poly(A) tail of mRNA's.</text>
</comment>
<comment type="catalytic activity">
    <reaction>
        <text>RNA(n) + ATP = RNA(n)-3'-adenine ribonucleotide + diphosphate</text>
        <dbReference type="Rhea" id="RHEA:11332"/>
        <dbReference type="Rhea" id="RHEA-COMP:14527"/>
        <dbReference type="Rhea" id="RHEA-COMP:17347"/>
        <dbReference type="ChEBI" id="CHEBI:30616"/>
        <dbReference type="ChEBI" id="CHEBI:33019"/>
        <dbReference type="ChEBI" id="CHEBI:140395"/>
        <dbReference type="ChEBI" id="CHEBI:173115"/>
        <dbReference type="EC" id="2.7.7.19"/>
    </reaction>
</comment>
<comment type="subunit">
    <text evidence="1">Heterodimer of a large (catalytic) subunit and a small (regulatory) subunit.</text>
</comment>
<comment type="similarity">
    <text evidence="2">Belongs to the poxviridae poly(A) polymerase catalytic subunit family.</text>
</comment>
<dbReference type="EC" id="2.7.7.19"/>
<dbReference type="EMBL" id="AJ581527">
    <property type="protein sequence ID" value="CAE52643.1"/>
    <property type="molecule type" value="Genomic_DNA"/>
</dbReference>
<dbReference type="RefSeq" id="NP_039065.1">
    <property type="nucleotide sequence ID" value="NC_002188.1"/>
</dbReference>
<dbReference type="SMR" id="P0DTA8"/>
<dbReference type="GeneID" id="1486650"/>
<dbReference type="KEGG" id="vg:1486650"/>
<dbReference type="OrthoDB" id="3428at10239"/>
<dbReference type="Proteomes" id="UP000150838">
    <property type="component" value="Segment"/>
</dbReference>
<dbReference type="GO" id="GO:0005524">
    <property type="term" value="F:ATP binding"/>
    <property type="evidence" value="ECO:0007669"/>
    <property type="project" value="UniProtKB-KW"/>
</dbReference>
<dbReference type="GO" id="GO:1990817">
    <property type="term" value="F:poly(A) RNA polymerase activity"/>
    <property type="evidence" value="ECO:0007669"/>
    <property type="project" value="UniProtKB-EC"/>
</dbReference>
<dbReference type="GO" id="GO:0006397">
    <property type="term" value="P:mRNA processing"/>
    <property type="evidence" value="ECO:0007669"/>
    <property type="project" value="UniProtKB-KW"/>
</dbReference>
<dbReference type="CDD" id="cd20919">
    <property type="entry name" value="polyA_pol_Pox"/>
    <property type="match status" value="1"/>
</dbReference>
<dbReference type="Gene3D" id="1.20.1270.320">
    <property type="entry name" value="Poxvirus poly(A) polymerase, N domain"/>
    <property type="match status" value="1"/>
</dbReference>
<dbReference type="Gene3D" id="3.30.460.60">
    <property type="entry name" value="Poxvirus poly(A) polymerase, nucleotidyltransferase domain"/>
    <property type="match status" value="1"/>
</dbReference>
<dbReference type="InterPro" id="IPR004976">
    <property type="entry name" value="PolyA_pol_cat_Poxvir"/>
</dbReference>
<dbReference type="InterPro" id="IPR037265">
    <property type="entry name" value="PolyA_pol_cat_sf"/>
</dbReference>
<dbReference type="InterPro" id="IPR024231">
    <property type="entry name" value="PolyA_pol_nucTrfase_Poxvir"/>
</dbReference>
<dbReference type="InterPro" id="IPR038419">
    <property type="entry name" value="PolyA_pol_nucTrfase_sf_Poxvir"/>
</dbReference>
<dbReference type="InterPro" id="IPR024397">
    <property type="entry name" value="Poxvirus_polyA_pol_cat_C"/>
</dbReference>
<dbReference type="InterPro" id="IPR024398">
    <property type="entry name" value="Poxvirus_polyA_pol_cat_N"/>
</dbReference>
<dbReference type="InterPro" id="IPR038337">
    <property type="entry name" value="Poxvirus_polyA_pol_cat_N_sf"/>
</dbReference>
<dbReference type="Pfam" id="PF03296">
    <property type="entry name" value="Pox_polyA_pol"/>
    <property type="match status" value="1"/>
</dbReference>
<dbReference type="Pfam" id="PF12629">
    <property type="entry name" value="Pox_polyA_pol_C"/>
    <property type="match status" value="1"/>
</dbReference>
<dbReference type="Pfam" id="PF12630">
    <property type="entry name" value="Pox_polyA_pol_N"/>
    <property type="match status" value="1"/>
</dbReference>
<dbReference type="PIRSF" id="PIRSF015693">
    <property type="entry name" value="VAC-48L_nuct"/>
    <property type="match status" value="1"/>
</dbReference>
<dbReference type="SUPFAM" id="SSF160957">
    <property type="entry name" value="Poly(A) polymerase catalytic subunit-like"/>
    <property type="match status" value="1"/>
</dbReference>
<proteinExistence type="inferred from homology"/>
<organism>
    <name type="scientific">Fowlpox virus</name>
    <name type="common">FPV</name>
    <dbReference type="NCBI Taxonomy" id="10261"/>
    <lineage>
        <taxon>Viruses</taxon>
        <taxon>Varidnaviria</taxon>
        <taxon>Bamfordvirae</taxon>
        <taxon>Nucleocytoviricota</taxon>
        <taxon>Pokkesviricetes</taxon>
        <taxon>Chitovirales</taxon>
        <taxon>Poxviridae</taxon>
        <taxon>Chordopoxvirinae</taxon>
        <taxon>Avipoxvirus</taxon>
    </lineage>
</organism>
<sequence length="472" mass="56081">MERSRQVYYIINEYLGRHPSSTEYQVLKHQVEKISKINNFNKETFFFLLKKNKNKFFKDLELSDDLLKKRIDEYFSKQKHAKRLGNLFAIMELQKILISSFTKTIGILTTKVPEYYHSTIKLEYSSMEKIADDILDSYNVVEPSKEVKGRHKVSDLVGHVYKIMEEYLRRHSNSCLCYGSYSLHFLNNKIEYGDIDVLQTNARTFLINIAFLIKFITGRRIVLLKVPFLKNYVIMHDEETNHVMDTFNIREKTMNMIPKIMIDNMYIVDPCIQLLNMIKMLSQIDRLEELQAKFEKLSVRLGTLLEYTRYRYSIPLDSESILEVRAKLDKDKRKITVDFKKYKLNYIKCYFYLDEVELKKFISKNSGLDEYEDFEAVTNSEYAIRNKTMYTYFSNTALMRSENEIHPITINALTSHALLYHVITRKFYDDLLGDLVRSLMIVEKVPVFKIIPRDKKQGRHTIIDIEKDIIFH</sequence>
<gene>
    <name type="primary">PAPL</name>
    <name type="ordered locus">FPV102</name>
</gene>
<evidence type="ECO:0000250" key="1"/>
<evidence type="ECO:0000305" key="2"/>
<name>PAP1_FOWPV</name>
<accession>P0DTA8</accession>
<accession>Q70H53</accession>
<accession>Q9J5B8</accession>
<reference key="1">
    <citation type="journal article" date="2004" name="J. Gen. Virol.">
        <title>Comparison of the genome sequence of FP9, an attenuated, tissue culture-adapted European fowlpox virus, with those of virulent American and European viruses.</title>
        <authorList>
            <person name="Skinner M.A."/>
            <person name="Laidlaw S.M."/>
        </authorList>
    </citation>
    <scope>NUCLEOTIDE SEQUENCE [LARGE SCALE GENOMIC DNA]</scope>
    <source>
        <strain>FP-9 / Isolate HP1-438 Munich</strain>
    </source>
</reference>
<keyword id="KW-0067">ATP-binding</keyword>
<keyword id="KW-0507">mRNA processing</keyword>
<keyword id="KW-0547">Nucleotide-binding</keyword>
<keyword id="KW-0804">Transcription</keyword>
<keyword id="KW-0808">Transferase</keyword>
<protein>
    <recommendedName>
        <fullName>Poly(A) polymerase catalytic subunit</fullName>
        <ecNumber>2.7.7.19</ecNumber>
    </recommendedName>
    <alternativeName>
        <fullName>Poly(A) polymerase large subunit</fullName>
        <shortName>PAP-L</shortName>
    </alternativeName>
    <alternativeName>
        <fullName>VP55</fullName>
    </alternativeName>
</protein>